<keyword id="KW-0325">Glycoprotein</keyword>
<keyword id="KW-0460">Magnesium</keyword>
<keyword id="KW-0472">Membrane</keyword>
<keyword id="KW-1185">Reference proteome</keyword>
<keyword id="KW-0808">Transferase</keyword>
<keyword id="KW-0812">Transmembrane</keyword>
<keyword id="KW-1133">Transmembrane helix</keyword>
<dbReference type="EC" id="2.5.1.-" evidence="12"/>
<dbReference type="EMBL" id="ADOT01000316">
    <property type="protein sequence ID" value="EGX43540.1"/>
    <property type="molecule type" value="Genomic_DNA"/>
</dbReference>
<dbReference type="RefSeq" id="XP_011127780.1">
    <property type="nucleotide sequence ID" value="XM_011129478.1"/>
</dbReference>
<dbReference type="SMR" id="G1XTZ7"/>
<dbReference type="STRING" id="756982.G1XTZ7"/>
<dbReference type="GeneID" id="22898686"/>
<dbReference type="eggNOG" id="KOG1381">
    <property type="taxonomic scope" value="Eukaryota"/>
</dbReference>
<dbReference type="HOGENOM" id="CLU_034879_3_2_1"/>
<dbReference type="InParanoid" id="G1XTZ7"/>
<dbReference type="OMA" id="SGAGMVW"/>
<dbReference type="OrthoDB" id="1983210at4890"/>
<dbReference type="UniPathway" id="UPA00213"/>
<dbReference type="Proteomes" id="UP000008784">
    <property type="component" value="Unassembled WGS sequence"/>
</dbReference>
<dbReference type="GO" id="GO:0005886">
    <property type="term" value="C:plasma membrane"/>
    <property type="evidence" value="ECO:0007669"/>
    <property type="project" value="TreeGrafter"/>
</dbReference>
<dbReference type="GO" id="GO:0016765">
    <property type="term" value="F:transferase activity, transferring alkyl or aryl (other than methyl) groups"/>
    <property type="evidence" value="ECO:0007669"/>
    <property type="project" value="InterPro"/>
</dbReference>
<dbReference type="GO" id="GO:0016114">
    <property type="term" value="P:terpenoid biosynthetic process"/>
    <property type="evidence" value="ECO:0007669"/>
    <property type="project" value="UniProtKB-UniPathway"/>
</dbReference>
<dbReference type="CDD" id="cd13959">
    <property type="entry name" value="PT_UbiA_COQ2"/>
    <property type="match status" value="1"/>
</dbReference>
<dbReference type="FunFam" id="1.10.357.140:FF:000008">
    <property type="entry name" value="4-hydroxybenzoate octaprenyltransferase"/>
    <property type="match status" value="1"/>
</dbReference>
<dbReference type="FunFam" id="1.20.120.1780:FF:000001">
    <property type="entry name" value="4-hydroxybenzoate octaprenyltransferase"/>
    <property type="match status" value="1"/>
</dbReference>
<dbReference type="Gene3D" id="1.10.357.140">
    <property type="entry name" value="UbiA prenyltransferase"/>
    <property type="match status" value="1"/>
</dbReference>
<dbReference type="Gene3D" id="1.20.120.1780">
    <property type="entry name" value="UbiA prenyltransferase"/>
    <property type="match status" value="1"/>
</dbReference>
<dbReference type="InterPro" id="IPR039653">
    <property type="entry name" value="Prenyltransferase"/>
</dbReference>
<dbReference type="InterPro" id="IPR000537">
    <property type="entry name" value="UbiA_prenyltransferase"/>
</dbReference>
<dbReference type="InterPro" id="IPR030470">
    <property type="entry name" value="UbiA_prenylTrfase_CS"/>
</dbReference>
<dbReference type="InterPro" id="IPR044878">
    <property type="entry name" value="UbiA_sf"/>
</dbReference>
<dbReference type="PANTHER" id="PTHR11048:SF28">
    <property type="entry name" value="4-HYDROXYBENZOATE POLYPRENYLTRANSFERASE, MITOCHONDRIAL"/>
    <property type="match status" value="1"/>
</dbReference>
<dbReference type="PANTHER" id="PTHR11048">
    <property type="entry name" value="PRENYLTRANSFERASES"/>
    <property type="match status" value="1"/>
</dbReference>
<dbReference type="Pfam" id="PF01040">
    <property type="entry name" value="UbiA"/>
    <property type="match status" value="1"/>
</dbReference>
<dbReference type="PROSITE" id="PS00943">
    <property type="entry name" value="UBIA"/>
    <property type="match status" value="1"/>
</dbReference>
<accession>G1XTZ7</accession>
<protein>
    <recommendedName>
        <fullName evidence="9">Polyprenyl transferase AOL_s00215g276</fullName>
        <ecNumber evidence="12">2.5.1.-</ecNumber>
    </recommendedName>
    <alternativeName>
        <fullName evidence="10">Sesquiterpenyl epoxy-cyclohexenoids cluster protein AOL_s00215g276</fullName>
        <shortName evidence="10">SECs cluster protein AOL_s00215g276</shortName>
    </alternativeName>
</protein>
<reference key="1">
    <citation type="journal article" date="2011" name="PLoS Pathog.">
        <title>Genomic and proteomic analyses of the fungus Arthrobotrys oligospora provide insights into nematode-trap formation.</title>
        <authorList>
            <person name="Yang J."/>
            <person name="Wang L."/>
            <person name="Ji X."/>
            <person name="Feng Y."/>
            <person name="Li X."/>
            <person name="Zou C."/>
            <person name="Xu J."/>
            <person name="Ren Y."/>
            <person name="Mi Q."/>
            <person name="Wu J."/>
            <person name="Liu S."/>
            <person name="Liu Y."/>
            <person name="Huang X."/>
            <person name="Wang H."/>
            <person name="Niu X."/>
            <person name="Li J."/>
            <person name="Liang L."/>
            <person name="Luo Y."/>
            <person name="Ji K."/>
            <person name="Zhou W."/>
            <person name="Yu Z."/>
            <person name="Li G."/>
            <person name="Liu Y."/>
            <person name="Li L."/>
            <person name="Qiao M."/>
            <person name="Feng L."/>
            <person name="Zhang K.-Q."/>
        </authorList>
    </citation>
    <scope>NUCLEOTIDE SEQUENCE [LARGE SCALE GENOMIC DNA]</scope>
    <source>
        <strain>ATCC 24927 / CBS 115.81 / DSM 1491</strain>
    </source>
</reference>
<reference key="2">
    <citation type="journal article" date="2017" name="Org. Lett.">
        <title>Selected mutations revealed intermediates and key precursors in the biosynthesis of polyketide-terpenoid hybrid sesquiterpenyl epoxy-cyclohexenoids.</title>
        <authorList>
            <person name="Teng L.L."/>
            <person name="Song T.Y."/>
            <person name="Xu Z.F."/>
            <person name="Liu X."/>
            <person name="Dai R."/>
            <person name="Chen Y.H."/>
            <person name="Li S.H."/>
            <person name="Zhang K.Q."/>
            <person name="Niu X.M."/>
        </authorList>
    </citation>
    <scope>FUNCTION</scope>
    <scope>DISRUPTION PHENOTYPE</scope>
</reference>
<reference key="3">
    <citation type="journal article" date="2021" name="J. Agric. Food Chem.">
        <title>Polyketide synthase-terpenoid synthase hybrid pathway regulation of trap formation through ammonia metabolism controls soil colonization of predominant nematode-trapping fungus.</title>
        <authorList>
            <person name="He Z.Q."/>
            <person name="Wang L.J."/>
            <person name="Wang Y.J."/>
            <person name="Chen Y.H."/>
            <person name="Wen Y."/>
            <person name="Zhang K.Q."/>
            <person name="Niu X.M."/>
        </authorList>
    </citation>
    <scope>FUNCTION</scope>
    <scope>DISRUPTION PHENOTYPE</scope>
    <scope>PATHWAY</scope>
</reference>
<reference key="4">
    <citation type="journal article" date="2022" name="J. Fungi">
        <title>The multifaceted gene 275 embedded in the PKS-PTS gene cluster was involved in the regulation of arthrobotrisin biosynthesis, TCA cycle, and septa formation in nematode-trapping fungus Arthrobotrys oligospora.</title>
        <authorList>
            <person name="Zhou J."/>
            <person name="Wu Q.F."/>
            <person name="Li S.H."/>
            <person name="Yan J.X."/>
            <person name="Wu L."/>
            <person name="Cheng Q.Y."/>
            <person name="He Z.Q."/>
            <person name="Yue X.T."/>
            <person name="Zhang K.Q."/>
            <person name="Zhang L.L."/>
            <person name="Niu X.M."/>
        </authorList>
    </citation>
    <scope>INDUCTION</scope>
</reference>
<reference key="5">
    <citation type="journal article" date="2025" name="J. Adv. Res.">
        <title>Identification of a transcription factor AoMsn2 of the Hog1 signaling pathway contributes to fungal growth, development and pathogenicity in Arthrobotrys oligospora.</title>
        <authorList>
            <person name="Liu Q."/>
            <person name="Jiang K."/>
            <person name="Duan S."/>
            <person name="Zhao N."/>
            <person name="Shen Y."/>
            <person name="Zhu L."/>
            <person name="Zhang K.Q."/>
            <person name="Yang J."/>
        </authorList>
    </citation>
    <scope>INDUCTION</scope>
</reference>
<proteinExistence type="evidence at transcript level"/>
<evidence type="ECO:0000250" key="1">
    <source>
        <dbReference type="UniProtKB" id="P32378"/>
    </source>
</evidence>
<evidence type="ECO:0000255" key="2"/>
<evidence type="ECO:0000255" key="3">
    <source>
        <dbReference type="PROSITE-ProRule" id="PRU00498"/>
    </source>
</evidence>
<evidence type="ECO:0000256" key="4">
    <source>
        <dbReference type="SAM" id="MobiDB-lite"/>
    </source>
</evidence>
<evidence type="ECO:0000269" key="5">
    <source>
    </source>
</evidence>
<evidence type="ECO:0000269" key="6">
    <source>
    </source>
</evidence>
<evidence type="ECO:0000269" key="7">
    <source>
    </source>
</evidence>
<evidence type="ECO:0000269" key="8">
    <source>
    </source>
</evidence>
<evidence type="ECO:0000303" key="9">
    <source>
    </source>
</evidence>
<evidence type="ECO:0000303" key="10">
    <source>
    </source>
</evidence>
<evidence type="ECO:0000305" key="11"/>
<evidence type="ECO:0000305" key="12">
    <source>
    </source>
</evidence>
<evidence type="ECO:0000305" key="13">
    <source>
    </source>
</evidence>
<name>AR276_ARTOA</name>
<feature type="chain" id="PRO_0000457843" description="Polyprenyl transferase AOL_s00215g276">
    <location>
        <begin position="1"/>
        <end position="366"/>
    </location>
</feature>
<feature type="transmembrane region" description="Helical" evidence="2">
    <location>
        <begin position="53"/>
        <end position="73"/>
    </location>
</feature>
<feature type="transmembrane region" description="Helical" evidence="2">
    <location>
        <begin position="85"/>
        <end position="105"/>
    </location>
</feature>
<feature type="transmembrane region" description="Helical" evidence="2">
    <location>
        <begin position="137"/>
        <end position="157"/>
    </location>
</feature>
<feature type="transmembrane region" description="Helical" evidence="2">
    <location>
        <begin position="160"/>
        <end position="180"/>
    </location>
</feature>
<feature type="transmembrane region" description="Helical" evidence="2">
    <location>
        <begin position="185"/>
        <end position="205"/>
    </location>
</feature>
<feature type="transmembrane region" description="Helical" evidence="2">
    <location>
        <begin position="212"/>
        <end position="232"/>
    </location>
</feature>
<feature type="transmembrane region" description="Helical" evidence="2">
    <location>
        <begin position="253"/>
        <end position="273"/>
    </location>
</feature>
<feature type="transmembrane region" description="Helical" evidence="2">
    <location>
        <begin position="281"/>
        <end position="301"/>
    </location>
</feature>
<feature type="transmembrane region" description="Helical" evidence="2">
    <location>
        <begin position="312"/>
        <end position="332"/>
    </location>
</feature>
<feature type="region of interest" description="Disordered" evidence="4">
    <location>
        <begin position="1"/>
        <end position="22"/>
    </location>
</feature>
<feature type="glycosylation site" description="N-linked (GlcNAc...) asparagine" evidence="3">
    <location>
        <position position="277"/>
    </location>
</feature>
<feature type="glycosylation site" description="N-linked (GlcNAc...) asparagine" evidence="3">
    <location>
        <position position="352"/>
    </location>
</feature>
<sequence length="366" mass="40402">MESIIARPRTRSSAKEKTQTMSAKKISANGNNIAVQAKSKRNTPLGVIKLARLHTLESLLCVYPAIWGACLSAGSHQKVFTPSSFLSVLFANWISMTIAHMAFCTFNDIVDRNFDGKVERTKVRPLPAGMISLRSAIIAFIVEMGLTVYISYATLGFDGALVCAPVWIASTIYPFMKRVVQWPQLVLGPIIGMAVFPGWVSVAGNLDTLRDAVPMFLATSAWVVYFDTIYATQDTNDDKKIGVKSLAVLFHNHMHQFLGFLGSIQIALLSFTARKANMSALFWSLGVCVWGLNIPFHLLSLDTKNPKTGGKVFLMNILLGLWITIVCVIELWTTTVMHLDVNDFLLKTVVHNITLTAQNIRSSVAF</sequence>
<gene>
    <name type="ORF">AOL_s00215g276</name>
</gene>
<organism>
    <name type="scientific">Arthrobotrys oligospora (strain ATCC 24927 / CBS 115.81 / DSM 1491)</name>
    <name type="common">Nematode-trapping fungus</name>
    <name type="synonym">Didymozoophaga oligospora</name>
    <dbReference type="NCBI Taxonomy" id="756982"/>
    <lineage>
        <taxon>Eukaryota</taxon>
        <taxon>Fungi</taxon>
        <taxon>Dikarya</taxon>
        <taxon>Ascomycota</taxon>
        <taxon>Pezizomycotina</taxon>
        <taxon>Orbiliomycetes</taxon>
        <taxon>Orbiliales</taxon>
        <taxon>Orbiliaceae</taxon>
        <taxon>Orbilia</taxon>
        <taxon>Orbilia oligospora</taxon>
    </lineage>
</organism>
<comment type="function">
    <text evidence="5 6 13">Polyprenyl transferase; part of the gene cluster that mediates the biosynthesis of sesquiterpenyl epoxy-cyclohexenoids (SECs) such as anthrobotrisins and arthrosporols, metabolites that possess a novel hybrid carbon skeleton consisting of a polyketide-derived epoxycyclohexenol combined with a terpenoid-derived monocyclic sesquiterpenol substructure (PKS-PTS hybrid) (PubMed:28692300, PubMed:33823587). The SEC pathway plays an important role for fungal soil colonization via decreasing fungal nematode-capturing ability (PubMed:33823587). Within the pathway, the polyprenyl transferase catalyzes the farnesylation of toluquinol to yield farnesyl hydroquinone, the first hybrid precursor for biosynthesis of SECs, and farnesyl quinone (34) might be the key precursor for the epoxy ring formation (PubMed:28692300, PubMed:33823587). The pathway begins with the biosynthesis of 6-methylsalicylic acid (6-MSA), the first precursor of the polyketide-derived epoxycyclohexenol in arthrosporols, by the polyketide synthase (PKS) AOL_s00215g283 via condensation of 1 acetate and 3 malonate units. The 6-methylsalicylic acid decarboxylase AOL_s00215g281 then catalyzes the decarboxylation of 6-methylsalicylic acid to yield m-cresol. The cytochrome P450 monooxygenase AOL_s00215g282 further oxidizes m-cresol to yield toluquinol. With the assistance of the oxidoreductase AOL_s00215g277, the polyprenyl transferase AOL_s00215g276 catalyzes the farnesylation of toluquinol to produce farnesyl hydroquinone, the hybrid precursor for biosynthesis of SECs. Farnesyl hydroquinone undergoes epoxidation and then subsequent dehydrogenation to form farnesyl epoxy-quinone, the first and simplest SEC. The cytochrome P450 monooxygenase AOL_s00215g278 and the FAD-dependent monooxygenase AOL_s00215g279 might be involved in the oxygenation of the phenol moiety, most likely in the epoxy formation. The cytochrome P450 monooxygenases AOL_s00215g274 and AOL_s00215g280 are involved in specific regional ketone reductions at respectively C-4 and C-1 of farnesyl epoxy-quinone PubMed:33823587 (Probable).</text>
</comment>
<comment type="cofactor">
    <cofactor evidence="1">
        <name>Mg(2+)</name>
        <dbReference type="ChEBI" id="CHEBI:18420"/>
    </cofactor>
</comment>
<comment type="pathway">
    <text evidence="6">Secondary metabolite biosynthesis; terpenoid biosynthesis.</text>
</comment>
<comment type="subcellular location">
    <subcellularLocation>
        <location evidence="2">Membrane</location>
        <topology evidence="2">Multi-pass membrane protein</topology>
    </subcellularLocation>
</comment>
<comment type="induction">
    <text evidence="7 8">Expression is down-regulated by the cluster-specific transcription factor AOL_s00215g275 (PubMed:36547594). Expression is also down-regulated by the HOG1-MAPK pathway downstream transcription factor MSN2 (PubMed:38331317).</text>
</comment>
<comment type="disruption phenotype">
    <text evidence="5 6">Abolishes the production of arthrobotrisins A to D and asthrosporol A, and leads to the accumulation of 6-methylsalicylic acid, toluquinol and two new toluquinol glycosides (PubMed:28692300, PubMed:33823587). Shows substantial reduction in conidiation (PubMed:33823587). Shows significantly increased ammonia levels in fungal mycelia (PubMed:33823587).</text>
</comment>
<comment type="similarity">
    <text evidence="11">Belongs to the UbiA prenyltransferase family.</text>
</comment>